<accession>B7HTX9</accession>
<comment type="function">
    <text evidence="1">Catalyzes the formation of the alpha-1,6-glucosidic linkages in glycogen by scission of a 1,4-alpha-linked oligosaccharide from growing alpha-1,4-glucan chains and the subsequent attachment of the oligosaccharide to the alpha-1,6 position.</text>
</comment>
<comment type="catalytic activity">
    <reaction evidence="1">
        <text>Transfers a segment of a (1-&gt;4)-alpha-D-glucan chain to a primary hydroxy group in a similar glucan chain.</text>
        <dbReference type="EC" id="2.4.1.18"/>
    </reaction>
</comment>
<comment type="pathway">
    <text evidence="1">Glycan biosynthesis; glycogen biosynthesis.</text>
</comment>
<comment type="subunit">
    <text evidence="1">Monomer.</text>
</comment>
<comment type="similarity">
    <text evidence="1">Belongs to the glycosyl hydrolase 13 family. GlgB subfamily.</text>
</comment>
<dbReference type="EC" id="2.4.1.18" evidence="1"/>
<dbReference type="EMBL" id="CP001177">
    <property type="protein sequence ID" value="ACJ78598.1"/>
    <property type="molecule type" value="Genomic_DNA"/>
</dbReference>
<dbReference type="SMR" id="B7HTX9"/>
<dbReference type="CAZy" id="CBM48">
    <property type="family name" value="Carbohydrate-Binding Module Family 48"/>
</dbReference>
<dbReference type="CAZy" id="GH13">
    <property type="family name" value="Glycoside Hydrolase Family 13"/>
</dbReference>
<dbReference type="KEGG" id="bcr:BCAH187_A5009"/>
<dbReference type="HOGENOM" id="CLU_004245_4_0_9"/>
<dbReference type="UniPathway" id="UPA00164"/>
<dbReference type="Proteomes" id="UP000002214">
    <property type="component" value="Chromosome"/>
</dbReference>
<dbReference type="GO" id="GO:0005829">
    <property type="term" value="C:cytosol"/>
    <property type="evidence" value="ECO:0007669"/>
    <property type="project" value="TreeGrafter"/>
</dbReference>
<dbReference type="GO" id="GO:0003844">
    <property type="term" value="F:1,4-alpha-glucan branching enzyme activity"/>
    <property type="evidence" value="ECO:0007669"/>
    <property type="project" value="UniProtKB-UniRule"/>
</dbReference>
<dbReference type="GO" id="GO:0043169">
    <property type="term" value="F:cation binding"/>
    <property type="evidence" value="ECO:0007669"/>
    <property type="project" value="InterPro"/>
</dbReference>
<dbReference type="GO" id="GO:0004553">
    <property type="term" value="F:hydrolase activity, hydrolyzing O-glycosyl compounds"/>
    <property type="evidence" value="ECO:0007669"/>
    <property type="project" value="InterPro"/>
</dbReference>
<dbReference type="GO" id="GO:0005978">
    <property type="term" value="P:glycogen biosynthetic process"/>
    <property type="evidence" value="ECO:0007669"/>
    <property type="project" value="UniProtKB-UniRule"/>
</dbReference>
<dbReference type="CDD" id="cd11322">
    <property type="entry name" value="AmyAc_Glg_BE"/>
    <property type="match status" value="1"/>
</dbReference>
<dbReference type="CDD" id="cd02855">
    <property type="entry name" value="E_set_GBE_prok_N"/>
    <property type="match status" value="1"/>
</dbReference>
<dbReference type="FunFam" id="2.60.40.10:FF:000169">
    <property type="entry name" value="1,4-alpha-glucan branching enzyme GlgB"/>
    <property type="match status" value="1"/>
</dbReference>
<dbReference type="FunFam" id="2.60.40.1180:FF:000002">
    <property type="entry name" value="1,4-alpha-glucan branching enzyme GlgB"/>
    <property type="match status" value="1"/>
</dbReference>
<dbReference type="FunFam" id="3.20.20.80:FF:000003">
    <property type="entry name" value="1,4-alpha-glucan branching enzyme GlgB"/>
    <property type="match status" value="1"/>
</dbReference>
<dbReference type="Gene3D" id="3.20.20.80">
    <property type="entry name" value="Glycosidases"/>
    <property type="match status" value="1"/>
</dbReference>
<dbReference type="Gene3D" id="2.60.40.1180">
    <property type="entry name" value="Golgi alpha-mannosidase II"/>
    <property type="match status" value="1"/>
</dbReference>
<dbReference type="Gene3D" id="2.60.40.10">
    <property type="entry name" value="Immunoglobulins"/>
    <property type="match status" value="1"/>
</dbReference>
<dbReference type="HAMAP" id="MF_00685">
    <property type="entry name" value="GlgB"/>
    <property type="match status" value="1"/>
</dbReference>
<dbReference type="InterPro" id="IPR006048">
    <property type="entry name" value="A-amylase/branching_C"/>
</dbReference>
<dbReference type="InterPro" id="IPR037439">
    <property type="entry name" value="Branching_enzy"/>
</dbReference>
<dbReference type="InterPro" id="IPR006407">
    <property type="entry name" value="GlgB"/>
</dbReference>
<dbReference type="InterPro" id="IPR044143">
    <property type="entry name" value="GlgB_N_E_set_prok"/>
</dbReference>
<dbReference type="InterPro" id="IPR006047">
    <property type="entry name" value="Glyco_hydro_13_cat_dom"/>
</dbReference>
<dbReference type="InterPro" id="IPR004193">
    <property type="entry name" value="Glyco_hydro_13_N"/>
</dbReference>
<dbReference type="InterPro" id="IPR013780">
    <property type="entry name" value="Glyco_hydro_b"/>
</dbReference>
<dbReference type="InterPro" id="IPR017853">
    <property type="entry name" value="Glycoside_hydrolase_SF"/>
</dbReference>
<dbReference type="InterPro" id="IPR013783">
    <property type="entry name" value="Ig-like_fold"/>
</dbReference>
<dbReference type="NCBIfam" id="TIGR01515">
    <property type="entry name" value="branching_enzym"/>
    <property type="match status" value="1"/>
</dbReference>
<dbReference type="NCBIfam" id="NF003811">
    <property type="entry name" value="PRK05402.1"/>
    <property type="match status" value="1"/>
</dbReference>
<dbReference type="NCBIfam" id="NF008967">
    <property type="entry name" value="PRK12313.1"/>
    <property type="match status" value="1"/>
</dbReference>
<dbReference type="PANTHER" id="PTHR43651">
    <property type="entry name" value="1,4-ALPHA-GLUCAN-BRANCHING ENZYME"/>
    <property type="match status" value="1"/>
</dbReference>
<dbReference type="PANTHER" id="PTHR43651:SF3">
    <property type="entry name" value="1,4-ALPHA-GLUCAN-BRANCHING ENZYME"/>
    <property type="match status" value="1"/>
</dbReference>
<dbReference type="Pfam" id="PF00128">
    <property type="entry name" value="Alpha-amylase"/>
    <property type="match status" value="2"/>
</dbReference>
<dbReference type="Pfam" id="PF02806">
    <property type="entry name" value="Alpha-amylase_C"/>
    <property type="match status" value="1"/>
</dbReference>
<dbReference type="Pfam" id="PF02922">
    <property type="entry name" value="CBM_48"/>
    <property type="match status" value="1"/>
</dbReference>
<dbReference type="PIRSF" id="PIRSF000463">
    <property type="entry name" value="GlgB"/>
    <property type="match status" value="1"/>
</dbReference>
<dbReference type="SMART" id="SM00642">
    <property type="entry name" value="Aamy"/>
    <property type="match status" value="1"/>
</dbReference>
<dbReference type="SUPFAM" id="SSF51445">
    <property type="entry name" value="(Trans)glycosidases"/>
    <property type="match status" value="1"/>
</dbReference>
<dbReference type="SUPFAM" id="SSF51011">
    <property type="entry name" value="Glycosyl hydrolase domain"/>
    <property type="match status" value="1"/>
</dbReference>
<name>GLGB_BACC7</name>
<reference key="1">
    <citation type="submission" date="2008-10" db="EMBL/GenBank/DDBJ databases">
        <title>Genome sequence of Bacillus cereus AH187.</title>
        <authorList>
            <person name="Dodson R.J."/>
            <person name="Durkin A.S."/>
            <person name="Rosovitz M.J."/>
            <person name="Rasko D.A."/>
            <person name="Kolsto A.B."/>
            <person name="Okstad O.A."/>
            <person name="Ravel J."/>
            <person name="Sutton G."/>
        </authorList>
    </citation>
    <scope>NUCLEOTIDE SEQUENCE [LARGE SCALE GENOMIC DNA]</scope>
    <source>
        <strain>AH187</strain>
    </source>
</reference>
<evidence type="ECO:0000255" key="1">
    <source>
        <dbReference type="HAMAP-Rule" id="MF_00685"/>
    </source>
</evidence>
<evidence type="ECO:0000256" key="2">
    <source>
        <dbReference type="SAM" id="MobiDB-lite"/>
    </source>
</evidence>
<proteinExistence type="inferred from homology"/>
<sequence>MSVINCEEVKRDEFHTEKYYDSYNIFGAHIVTEDEMRGVRFTVWAPHAKAMSVVGDFNEWDYEQHKMLQVTEEGIWSLFIPHIEEKEIYKYAIETTAGDVIFKADPYAVYAEVRPNTASVVFDIKGYEWNDKNWSRKKKKKSVYKEAMTVYELHFGSWKKKEDGTLYSYREMAEELIPYVVEHQFTHIEIMPLVEHPYDRSWGYQGTGYYAATSRFGTPHDLMYFVDECHKYGIGVILDWVPGHFCKDAHGLYLFDGTPTYEYKDKDVQENPVWGTVNFDLGKREVRNFLISNALFWMRYFHIDGFRVDAVANMLYWNKEGQEQSNEHAVSFLRELNEAVFAEDEDFLMTAEDSTAWPLVTAPTYEGGLGFNYKWNMGWMNDVLKYMECAPEYRKYIHEKMTFSLLYAYSENFILPLSHDEVVHGKKSLLNKMPGDYWDKFAQLRLLYGYFFTHPGKKLLFMGGEFGQFDEWKDLEDLDWNLHDFEMHRYMHDYFKELIALYKRSKPLWQLDHSPEGFQWIDANNNEQSIFSFIRQGDKQEDALVVVCNFTKATYENYKVGVPDFEYYNEVLNSDAEQYGGSGQVNKKRLKAIQEPFHNQAAHVEITIPPFGVSILRPVKTRKGSKKQDGSKTKVRSNVTSRGKR</sequence>
<keyword id="KW-0119">Carbohydrate metabolism</keyword>
<keyword id="KW-0320">Glycogen biosynthesis</keyword>
<keyword id="KW-0321">Glycogen metabolism</keyword>
<keyword id="KW-0328">Glycosyltransferase</keyword>
<keyword id="KW-0808">Transferase</keyword>
<organism>
    <name type="scientific">Bacillus cereus (strain AH187)</name>
    <dbReference type="NCBI Taxonomy" id="405534"/>
    <lineage>
        <taxon>Bacteria</taxon>
        <taxon>Bacillati</taxon>
        <taxon>Bacillota</taxon>
        <taxon>Bacilli</taxon>
        <taxon>Bacillales</taxon>
        <taxon>Bacillaceae</taxon>
        <taxon>Bacillus</taxon>
        <taxon>Bacillus cereus group</taxon>
    </lineage>
</organism>
<protein>
    <recommendedName>
        <fullName evidence="1">1,4-alpha-glucan branching enzyme GlgB</fullName>
        <ecNumber evidence="1">2.4.1.18</ecNumber>
    </recommendedName>
    <alternativeName>
        <fullName evidence="1">1,4-alpha-D-glucan:1,4-alpha-D-glucan 6-glucosyl-transferase</fullName>
    </alternativeName>
    <alternativeName>
        <fullName evidence="1">Alpha-(1-&gt;4)-glucan branching enzyme</fullName>
    </alternativeName>
    <alternativeName>
        <fullName evidence="1">Glycogen branching enzyme</fullName>
        <shortName evidence="1">BE</shortName>
    </alternativeName>
</protein>
<feature type="chain" id="PRO_1000131810" description="1,4-alpha-glucan branching enzyme GlgB">
    <location>
        <begin position="1"/>
        <end position="645"/>
    </location>
</feature>
<feature type="region of interest" description="Disordered" evidence="2">
    <location>
        <begin position="619"/>
        <end position="645"/>
    </location>
</feature>
<feature type="compositionally biased region" description="Polar residues" evidence="2">
    <location>
        <begin position="636"/>
        <end position="645"/>
    </location>
</feature>
<feature type="active site" description="Nucleophile" evidence="1">
    <location>
        <position position="309"/>
    </location>
</feature>
<feature type="active site" description="Proton donor" evidence="1">
    <location>
        <position position="352"/>
    </location>
</feature>
<gene>
    <name evidence="1" type="primary">glgB</name>
    <name type="ordered locus">BCAH187_A5009</name>
</gene>